<reference evidence="6" key="1">
    <citation type="journal article" date="1996" name="DNA Cell Biol.">
        <title>Cloning, expression, and chromosomal localization of the rat mitochondrial capsule selenoprotein gene (MCS): the reading frame does not contain potential UGA selenocysteine codons.</title>
        <authorList>
            <person name="Adham I.M."/>
            <person name="Tessmann D."/>
            <person name="Soliman K.A."/>
            <person name="Murphy D."/>
            <person name="Kremling H."/>
            <person name="Szpirer C."/>
            <person name="Engel W."/>
        </authorList>
    </citation>
    <scope>NUCLEOTIDE SEQUENCE [MRNA]</scope>
    <scope>TISSUE SPECIFICITY</scope>
    <scope>DEVELOPMENTAL STAGE</scope>
    <source>
        <tissue>Testis</tissue>
    </source>
</reference>
<reference evidence="6" key="2">
    <citation type="journal article" date="1996" name="Mol. Reprod. Dev.">
        <title>Developmental expression, intracellular localization, and selenium content of the cysteine-rich protein associated with the mitochondrial capsules of mouse sperm.</title>
        <authorList>
            <person name="Cataldo L."/>
            <person name="Baig K."/>
            <person name="Oko R."/>
            <person name="Mastrangelo M.A."/>
            <person name="Kleene K.C."/>
        </authorList>
    </citation>
    <scope>NUCLEOTIDE SEQUENCE [MRNA]</scope>
    <source>
        <strain>Sprague-Dawley</strain>
        <tissue>Testis</tissue>
    </source>
</reference>
<reference key="3">
    <citation type="journal article" date="2004" name="Genome Res.">
        <title>The status, quality, and expansion of the NIH full-length cDNA project: the Mammalian Gene Collection (MGC).</title>
        <authorList>
            <consortium name="The MGC Project Team"/>
        </authorList>
    </citation>
    <scope>NUCLEOTIDE SEQUENCE [LARGE SCALE MRNA]</scope>
    <source>
        <tissue>Testis</tissue>
    </source>
</reference>
<reference key="4">
    <citation type="journal article" date="2009" name="Reproduction">
        <title>Identification of novel immunodominant epididymal sperm proteins using combinatorial approach.</title>
        <authorList>
            <person name="Khan S.A."/>
            <person name="Suryawanshi A.R."/>
            <person name="Ranpura S.A."/>
            <person name="Jadhav S.V."/>
            <person name="Khole V.V."/>
        </authorList>
    </citation>
    <scope>IDENTIFICATION BY MASS SPECTROMETRY</scope>
    <scope>TISSUE SPECIFICITY</scope>
</reference>
<reference key="5">
    <citation type="journal article" date="2012" name="Nat. Commun.">
        <title>Quantitative maps of protein phosphorylation sites across 14 different rat organs and tissues.</title>
        <authorList>
            <person name="Lundby A."/>
            <person name="Secher A."/>
            <person name="Lage K."/>
            <person name="Nordsborg N.B."/>
            <person name="Dmytriyev A."/>
            <person name="Lundby C."/>
            <person name="Olsen J.V."/>
        </authorList>
    </citation>
    <scope>PHOSPHORYLATION [LARGE SCALE ANALYSIS] AT SER-38; SER-45; SER-113 AND SER-131</scope>
    <scope>IDENTIFICATION BY MASS SPECTROMETRY [LARGE SCALE ANALYSIS]</scope>
</reference>
<accession>Q64298</accession>
<proteinExistence type="evidence at protein level"/>
<keyword id="KW-0963">Cytoplasm</keyword>
<keyword id="KW-0278">Fertilization</keyword>
<keyword id="KW-0472">Membrane</keyword>
<keyword id="KW-0496">Mitochondrion</keyword>
<keyword id="KW-0597">Phosphoprotein</keyword>
<keyword id="KW-1185">Reference proteome</keyword>
<name>MCSP_RAT</name>
<evidence type="ECO:0000250" key="1"/>
<evidence type="ECO:0000250" key="2">
    <source>
        <dbReference type="UniProtKB" id="P15265"/>
    </source>
</evidence>
<evidence type="ECO:0000256" key="3">
    <source>
        <dbReference type="SAM" id="MobiDB-lite"/>
    </source>
</evidence>
<evidence type="ECO:0000269" key="4">
    <source>
    </source>
</evidence>
<evidence type="ECO:0000269" key="5">
    <source>
    </source>
</evidence>
<evidence type="ECO:0000305" key="6"/>
<evidence type="ECO:0000305" key="7">
    <source>
    </source>
</evidence>
<evidence type="ECO:0007744" key="8">
    <source>
    </source>
</evidence>
<feature type="chain" id="PRO_0000096309" description="Sperm mitochondrial-associated cysteine-rich protein">
    <location>
        <begin position="1"/>
        <end position="145"/>
    </location>
</feature>
<feature type="region of interest" description="Disordered" evidence="3">
    <location>
        <begin position="105"/>
        <end position="145"/>
    </location>
</feature>
<feature type="compositionally biased region" description="Polar residues" evidence="3">
    <location>
        <begin position="116"/>
        <end position="145"/>
    </location>
</feature>
<feature type="modified residue" description="Phosphoserine" evidence="8">
    <location>
        <position position="38"/>
    </location>
</feature>
<feature type="modified residue" description="Phosphoserine" evidence="8">
    <location>
        <position position="45"/>
    </location>
</feature>
<feature type="modified residue" description="Phosphoserine" evidence="8">
    <location>
        <position position="113"/>
    </location>
</feature>
<feature type="modified residue" description="Phosphoserine" evidence="8">
    <location>
        <position position="131"/>
    </location>
</feature>
<gene>
    <name type="primary">Smcp</name>
    <name type="synonym">Mcs</name>
    <name type="synonym">Mcsp</name>
</gene>
<protein>
    <recommendedName>
        <fullName>Sperm mitochondrial-associated cysteine-rich protein</fullName>
    </recommendedName>
</protein>
<dbReference type="EMBL" id="X87883">
    <property type="protein sequence ID" value="CAA61138.1"/>
    <property type="molecule type" value="mRNA"/>
</dbReference>
<dbReference type="EMBL" id="U48702">
    <property type="protein sequence ID" value="AAB01896.1"/>
    <property type="molecule type" value="mRNA"/>
</dbReference>
<dbReference type="EMBL" id="BC078795">
    <property type="protein sequence ID" value="AAH78795.1"/>
    <property type="molecule type" value="mRNA"/>
</dbReference>
<dbReference type="RefSeq" id="NP_113724.1">
    <property type="nucleotide sequence ID" value="NM_031536.2"/>
</dbReference>
<dbReference type="STRING" id="10116.ENSRNOP00000012371"/>
<dbReference type="GlyGen" id="Q64298">
    <property type="glycosylation" value="2 sites"/>
</dbReference>
<dbReference type="iPTMnet" id="Q64298"/>
<dbReference type="PhosphoSitePlus" id="Q64298"/>
<dbReference type="PaxDb" id="10116-ENSRNOP00000012371"/>
<dbReference type="Ensembl" id="ENSRNOT00000012371.5">
    <property type="protein sequence ID" value="ENSRNOP00000012371.2"/>
    <property type="gene ID" value="ENSRNOG00000009326.5"/>
</dbReference>
<dbReference type="GeneID" id="24899"/>
<dbReference type="KEGG" id="rno:24899"/>
<dbReference type="UCSC" id="RGD:3069">
    <property type="organism name" value="rat"/>
</dbReference>
<dbReference type="AGR" id="RGD:3069"/>
<dbReference type="CTD" id="4184"/>
<dbReference type="RGD" id="3069">
    <property type="gene designation" value="Smcp"/>
</dbReference>
<dbReference type="eggNOG" id="ENOG502TF5H">
    <property type="taxonomic scope" value="Eukaryota"/>
</dbReference>
<dbReference type="GeneTree" id="ENSGT00730000114093"/>
<dbReference type="HOGENOM" id="CLU_1805544_0_0_1"/>
<dbReference type="InParanoid" id="Q64298"/>
<dbReference type="OMA" id="PQKSPCC"/>
<dbReference type="OrthoDB" id="9635076at2759"/>
<dbReference type="PRO" id="PR:Q64298"/>
<dbReference type="Proteomes" id="UP000002494">
    <property type="component" value="Chromosome 2"/>
</dbReference>
<dbReference type="Bgee" id="ENSRNOG00000009326">
    <property type="expression patterns" value="Expressed in testis and 9 other cell types or tissues"/>
</dbReference>
<dbReference type="GO" id="GO:0005737">
    <property type="term" value="C:cytoplasm"/>
    <property type="evidence" value="ECO:0000250"/>
    <property type="project" value="UniProtKB"/>
</dbReference>
<dbReference type="GO" id="GO:0031966">
    <property type="term" value="C:mitochondrial membrane"/>
    <property type="evidence" value="ECO:0007669"/>
    <property type="project" value="UniProtKB-SubCell"/>
</dbReference>
<dbReference type="GO" id="GO:0005739">
    <property type="term" value="C:mitochondrion"/>
    <property type="evidence" value="ECO:0000250"/>
    <property type="project" value="UniProtKB"/>
</dbReference>
<dbReference type="GO" id="GO:0007339">
    <property type="term" value="P:binding of sperm to zona pellucida"/>
    <property type="evidence" value="ECO:0000266"/>
    <property type="project" value="RGD"/>
</dbReference>
<dbReference type="GO" id="GO:0030317">
    <property type="term" value="P:flagellated sperm motility"/>
    <property type="evidence" value="ECO:0000250"/>
    <property type="project" value="UniProtKB"/>
</dbReference>
<dbReference type="GO" id="GO:0007341">
    <property type="term" value="P:penetration of zona pellucida"/>
    <property type="evidence" value="ECO:0000266"/>
    <property type="project" value="RGD"/>
</dbReference>
<comment type="function">
    <text evidence="2">Involved in sperm motility. Its absence is associated with genetic background dependent male infertility. Infertility may be due to reduced sperm motility in the female reproductive tract and inability to penetrate the oocyte zona pellucida (By similarity).</text>
</comment>
<comment type="subcellular location">
    <subcellularLocation>
        <location>Cytoplasm</location>
    </subcellularLocation>
    <subcellularLocation>
        <location evidence="6">Mitochondrion membrane</location>
        <topology evidence="6">Peripheral membrane protein</topology>
        <orientation evidence="6">Cytoplasmic side</orientation>
    </subcellularLocation>
    <text evidence="1">Becomes associated with the spermatid mitochondrion capsule at step 16 of spermatogenesis.</text>
</comment>
<comment type="tissue specificity">
    <text evidence="4 5">Testis. Selectively expressed in the spermatids of seminiferous tubules and in flagella of epididymal sperm.</text>
</comment>
<comment type="developmental stage">
    <text evidence="5">Expressed in postmeiotic cells.</text>
</comment>
<comment type="caution">
    <text evidence="7">Was originally thought to be a selenoprotein and was known as sperm mitochondrial capsule selenoprotein.</text>
</comment>
<sequence length="145" mass="15148">MSDSSKTNQCCPTPCCPPKPCCPPKPCCLQKSPCCPKSPCCPPKSPCCTPKVCPCPTPCPCPATCPAACACPCPMKPCCPTKCTCCPKKCTCCPQPTCCVQPTCCSSENKTESDSDGSGQTQDRGAQTQQSPQGGQGNWNQKKTK</sequence>
<organism>
    <name type="scientific">Rattus norvegicus</name>
    <name type="common">Rat</name>
    <dbReference type="NCBI Taxonomy" id="10116"/>
    <lineage>
        <taxon>Eukaryota</taxon>
        <taxon>Metazoa</taxon>
        <taxon>Chordata</taxon>
        <taxon>Craniata</taxon>
        <taxon>Vertebrata</taxon>
        <taxon>Euteleostomi</taxon>
        <taxon>Mammalia</taxon>
        <taxon>Eutheria</taxon>
        <taxon>Euarchontoglires</taxon>
        <taxon>Glires</taxon>
        <taxon>Rodentia</taxon>
        <taxon>Myomorpha</taxon>
        <taxon>Muroidea</taxon>
        <taxon>Muridae</taxon>
        <taxon>Murinae</taxon>
        <taxon>Rattus</taxon>
    </lineage>
</organism>